<organism>
    <name type="scientific">Pseudomonas fluorescens (strain Pf0-1)</name>
    <dbReference type="NCBI Taxonomy" id="205922"/>
    <lineage>
        <taxon>Bacteria</taxon>
        <taxon>Pseudomonadati</taxon>
        <taxon>Pseudomonadota</taxon>
        <taxon>Gammaproteobacteria</taxon>
        <taxon>Pseudomonadales</taxon>
        <taxon>Pseudomonadaceae</taxon>
        <taxon>Pseudomonas</taxon>
    </lineage>
</organism>
<name>TRUD_PSEPF</name>
<gene>
    <name evidence="1" type="primary">truD</name>
    <name type="ordered locus">Pfl01_1128</name>
</gene>
<proteinExistence type="inferred from homology"/>
<comment type="function">
    <text evidence="1">Responsible for synthesis of pseudouridine from uracil-13 in transfer RNAs.</text>
</comment>
<comment type="catalytic activity">
    <reaction evidence="1">
        <text>uridine(13) in tRNA = pseudouridine(13) in tRNA</text>
        <dbReference type="Rhea" id="RHEA:42540"/>
        <dbReference type="Rhea" id="RHEA-COMP:10105"/>
        <dbReference type="Rhea" id="RHEA-COMP:10106"/>
        <dbReference type="ChEBI" id="CHEBI:65314"/>
        <dbReference type="ChEBI" id="CHEBI:65315"/>
        <dbReference type="EC" id="5.4.99.27"/>
    </reaction>
</comment>
<comment type="similarity">
    <text evidence="1">Belongs to the pseudouridine synthase TruD family.</text>
</comment>
<evidence type="ECO:0000255" key="1">
    <source>
        <dbReference type="HAMAP-Rule" id="MF_01082"/>
    </source>
</evidence>
<protein>
    <recommendedName>
        <fullName evidence="1">tRNA pseudouridine synthase D</fullName>
        <ecNumber evidence="1">5.4.99.27</ecNumber>
    </recommendedName>
    <alternativeName>
        <fullName evidence="1">tRNA pseudouridine(13) synthase</fullName>
    </alternativeName>
    <alternativeName>
        <fullName evidence="1">tRNA pseudouridylate synthase D</fullName>
    </alternativeName>
    <alternativeName>
        <fullName evidence="1">tRNA-uridine isomerase D</fullName>
    </alternativeName>
</protein>
<dbReference type="EC" id="5.4.99.27" evidence="1"/>
<dbReference type="EMBL" id="CP000094">
    <property type="protein sequence ID" value="ABA72871.1"/>
    <property type="molecule type" value="Genomic_DNA"/>
</dbReference>
<dbReference type="RefSeq" id="WP_011332702.1">
    <property type="nucleotide sequence ID" value="NC_007492.2"/>
</dbReference>
<dbReference type="SMR" id="Q3KH85"/>
<dbReference type="KEGG" id="pfo:Pfl01_1128"/>
<dbReference type="eggNOG" id="COG0585">
    <property type="taxonomic scope" value="Bacteria"/>
</dbReference>
<dbReference type="HOGENOM" id="CLU_005281_4_0_6"/>
<dbReference type="Proteomes" id="UP000002704">
    <property type="component" value="Chromosome"/>
</dbReference>
<dbReference type="GO" id="GO:0005829">
    <property type="term" value="C:cytosol"/>
    <property type="evidence" value="ECO:0007669"/>
    <property type="project" value="TreeGrafter"/>
</dbReference>
<dbReference type="GO" id="GO:0003723">
    <property type="term" value="F:RNA binding"/>
    <property type="evidence" value="ECO:0007669"/>
    <property type="project" value="InterPro"/>
</dbReference>
<dbReference type="GO" id="GO:0160150">
    <property type="term" value="F:tRNA pseudouridine(13) synthase activity"/>
    <property type="evidence" value="ECO:0007669"/>
    <property type="project" value="UniProtKB-EC"/>
</dbReference>
<dbReference type="GO" id="GO:0031119">
    <property type="term" value="P:tRNA pseudouridine synthesis"/>
    <property type="evidence" value="ECO:0007669"/>
    <property type="project" value="UniProtKB-UniRule"/>
</dbReference>
<dbReference type="CDD" id="cd02575">
    <property type="entry name" value="PseudoU_synth_EcTruD"/>
    <property type="match status" value="1"/>
</dbReference>
<dbReference type="Gene3D" id="3.30.2350.20">
    <property type="entry name" value="TruD, catalytic domain"/>
    <property type="match status" value="1"/>
</dbReference>
<dbReference type="Gene3D" id="3.30.2340.10">
    <property type="entry name" value="TruD, insertion domain"/>
    <property type="match status" value="1"/>
</dbReference>
<dbReference type="HAMAP" id="MF_01082">
    <property type="entry name" value="TruD"/>
    <property type="match status" value="1"/>
</dbReference>
<dbReference type="InterPro" id="IPR020103">
    <property type="entry name" value="PsdUridine_synth_cat_dom_sf"/>
</dbReference>
<dbReference type="InterPro" id="IPR001656">
    <property type="entry name" value="PsdUridine_synth_TruD"/>
</dbReference>
<dbReference type="InterPro" id="IPR020119">
    <property type="entry name" value="PsdUridine_synth_TruD_CS"/>
</dbReference>
<dbReference type="InterPro" id="IPR011760">
    <property type="entry name" value="PsdUridine_synth_TruD_insert"/>
</dbReference>
<dbReference type="InterPro" id="IPR042214">
    <property type="entry name" value="TruD_catalytic"/>
</dbReference>
<dbReference type="InterPro" id="IPR043165">
    <property type="entry name" value="TruD_insert_sf"/>
</dbReference>
<dbReference type="InterPro" id="IPR050170">
    <property type="entry name" value="TruD_pseudoU_synthase"/>
</dbReference>
<dbReference type="NCBIfam" id="NF002153">
    <property type="entry name" value="PRK00984.1-2"/>
    <property type="match status" value="1"/>
</dbReference>
<dbReference type="PANTHER" id="PTHR47811">
    <property type="entry name" value="TRNA PSEUDOURIDINE SYNTHASE D"/>
    <property type="match status" value="1"/>
</dbReference>
<dbReference type="PANTHER" id="PTHR47811:SF1">
    <property type="entry name" value="TRNA PSEUDOURIDINE SYNTHASE D"/>
    <property type="match status" value="1"/>
</dbReference>
<dbReference type="Pfam" id="PF01142">
    <property type="entry name" value="TruD"/>
    <property type="match status" value="2"/>
</dbReference>
<dbReference type="SUPFAM" id="SSF55120">
    <property type="entry name" value="Pseudouridine synthase"/>
    <property type="match status" value="1"/>
</dbReference>
<dbReference type="PROSITE" id="PS50984">
    <property type="entry name" value="TRUD"/>
    <property type="match status" value="1"/>
</dbReference>
<dbReference type="PROSITE" id="PS01268">
    <property type="entry name" value="UPF0024"/>
    <property type="match status" value="1"/>
</dbReference>
<keyword id="KW-0413">Isomerase</keyword>
<keyword id="KW-0819">tRNA processing</keyword>
<feature type="chain" id="PRO_0000230146" description="tRNA pseudouridine synthase D">
    <location>
        <begin position="1"/>
        <end position="352"/>
    </location>
</feature>
<feature type="domain" description="TRUD" evidence="1">
    <location>
        <begin position="157"/>
        <end position="303"/>
    </location>
</feature>
<feature type="active site" description="Nucleophile" evidence="1">
    <location>
        <position position="81"/>
    </location>
</feature>
<sequence>MNELQLLGPRAYGDALGTAVLKAIAEDFQVDEVLDIPFSGDGEHLWIWVEKRGLNTEEAARRIAKAAGVPLRTVSYAGLKDRQALTRQWFSVQLPGKADPDLSAAENDTLKILKTTRHKRKLQRGAHSANGFTLRLTQFNGDKAAIDERLQLIAKQGIPNYFGAQRFGHDGGNVVDARSWAARKALPEQRNVRSRLLSTARSFLFNQVLAARVADGTWQRAQVGDLLAFTDSRSFFPAGEAECSDPRLAILDLHPTGPQWGEGDSPAAGVVHDLEQGIAAREADLRDWLINAGMSHERRILRLPIGGLTWHYPEPDILQLEFVLPAGCFATVLVRELVDLVPVGQTDSPCVF</sequence>
<reference key="1">
    <citation type="journal article" date="2009" name="Genome Biol.">
        <title>Genomic and genetic analyses of diversity and plant interactions of Pseudomonas fluorescens.</title>
        <authorList>
            <person name="Silby M.W."/>
            <person name="Cerdeno-Tarraga A.M."/>
            <person name="Vernikos G.S."/>
            <person name="Giddens S.R."/>
            <person name="Jackson R.W."/>
            <person name="Preston G.M."/>
            <person name="Zhang X.-X."/>
            <person name="Moon C.D."/>
            <person name="Gehrig S.M."/>
            <person name="Godfrey S.A.C."/>
            <person name="Knight C.G."/>
            <person name="Malone J.G."/>
            <person name="Robinson Z."/>
            <person name="Spiers A.J."/>
            <person name="Harris S."/>
            <person name="Challis G.L."/>
            <person name="Yaxley A.M."/>
            <person name="Harris D."/>
            <person name="Seeger K."/>
            <person name="Murphy L."/>
            <person name="Rutter S."/>
            <person name="Squares R."/>
            <person name="Quail M.A."/>
            <person name="Saunders E."/>
            <person name="Mavromatis K."/>
            <person name="Brettin T.S."/>
            <person name="Bentley S.D."/>
            <person name="Hothersall J."/>
            <person name="Stephens E."/>
            <person name="Thomas C.M."/>
            <person name="Parkhill J."/>
            <person name="Levy S.B."/>
            <person name="Rainey P.B."/>
            <person name="Thomson N.R."/>
        </authorList>
    </citation>
    <scope>NUCLEOTIDE SEQUENCE [LARGE SCALE GENOMIC DNA]</scope>
    <source>
        <strain>Pf0-1</strain>
    </source>
</reference>
<accession>Q3KH85</accession>